<comment type="function">
    <text evidence="1">Required for the transposition of the insertion element.</text>
</comment>
<comment type="similarity">
    <text evidence="1">Belongs to the transposase IS1111A/IS1328/IS1533 family.</text>
</comment>
<accession>Q56897</accession>
<proteinExistence type="inferred from homology"/>
<sequence>MPNVTLIGIDLGKNSFHIHCQEKHGNTLLRKRFSRIQLTQFLATCPPCIVAMESCAGAHFMARHISQLGHQVKLISPQFVRPFVKSNKNDFIDAEAICEATSRPSMHFVTPRTEDQQAMSALHRVRDALVRERVKATNQMHAFLLEFGISMPRGIAVIKRLATVPEEHELPPYLVRLLTRLHQHYGYLCEQIEEIERELKNHLADDETAQRLLTIPGIGTITASLLATKLGDGKNYLSSRDFGASTGLVPRQYSTGGKSTLMGISKRGDKNLRRLLVQCARVYMQRLEYQSGRLAEWVNGQLTRHHSNVVACALANKLARIAWVVTTQGTVFSK</sequence>
<feature type="chain" id="PRO_0000075454" description="Transposase for insertion sequence element IS1328">
    <location>
        <begin position="1"/>
        <end position="334"/>
    </location>
</feature>
<reference key="1">
    <citation type="journal article" date="1995" name="FEMS Microbiol. Lett.">
        <title>Virulence-associated fyuA/irp2 gene cluster of Yersinia enterocolitica biotype 1B carries a novel insertion sequence IS1328.</title>
        <authorList>
            <person name="Rakin A."/>
            <person name="Heesemann J."/>
        </authorList>
    </citation>
    <scope>NUCLEOTIDE SEQUENCE [GENOMIC DNA]</scope>
    <source>
        <strain>ATCC 51871 / WA-314 / Serotype O:8</strain>
    </source>
</reference>
<protein>
    <recommendedName>
        <fullName>Transposase for insertion sequence element IS1328</fullName>
    </recommendedName>
</protein>
<dbReference type="EMBL" id="Z48244">
    <property type="protein sequence ID" value="CAA88289.1"/>
    <property type="molecule type" value="Genomic_DNA"/>
</dbReference>
<dbReference type="PIR" id="S52406">
    <property type="entry name" value="S52406"/>
</dbReference>
<dbReference type="SMR" id="Q56897"/>
<dbReference type="GO" id="GO:0003677">
    <property type="term" value="F:DNA binding"/>
    <property type="evidence" value="ECO:0007669"/>
    <property type="project" value="UniProtKB-KW"/>
</dbReference>
<dbReference type="GO" id="GO:0004803">
    <property type="term" value="F:transposase activity"/>
    <property type="evidence" value="ECO:0007669"/>
    <property type="project" value="InterPro"/>
</dbReference>
<dbReference type="GO" id="GO:0006313">
    <property type="term" value="P:DNA transposition"/>
    <property type="evidence" value="ECO:0007669"/>
    <property type="project" value="InterPro"/>
</dbReference>
<dbReference type="InterPro" id="IPR002525">
    <property type="entry name" value="Transp_IS110-like_N"/>
</dbReference>
<dbReference type="InterPro" id="IPR047650">
    <property type="entry name" value="Transpos_IS110"/>
</dbReference>
<dbReference type="InterPro" id="IPR003346">
    <property type="entry name" value="Transposase_20"/>
</dbReference>
<dbReference type="NCBIfam" id="NF033542">
    <property type="entry name" value="transpos_IS110"/>
    <property type="match status" value="1"/>
</dbReference>
<dbReference type="PANTHER" id="PTHR33055:SF3">
    <property type="entry name" value="PUTATIVE TRANSPOSASE FOR IS117-RELATED"/>
    <property type="match status" value="1"/>
</dbReference>
<dbReference type="PANTHER" id="PTHR33055">
    <property type="entry name" value="TRANSPOSASE FOR INSERTION SEQUENCE ELEMENT IS1111A"/>
    <property type="match status" value="1"/>
</dbReference>
<dbReference type="Pfam" id="PF01548">
    <property type="entry name" value="DEDD_Tnp_IS110"/>
    <property type="match status" value="1"/>
</dbReference>
<dbReference type="Pfam" id="PF02371">
    <property type="entry name" value="Transposase_20"/>
    <property type="match status" value="1"/>
</dbReference>
<keyword id="KW-0233">DNA recombination</keyword>
<keyword id="KW-0238">DNA-binding</keyword>
<keyword id="KW-0814">Transposable element</keyword>
<keyword id="KW-0815">Transposition</keyword>
<evidence type="ECO:0000305" key="1"/>
<organism>
    <name type="scientific">Yersinia enterocolitica</name>
    <dbReference type="NCBI Taxonomy" id="630"/>
    <lineage>
        <taxon>Bacteria</taxon>
        <taxon>Pseudomonadati</taxon>
        <taxon>Pseudomonadota</taxon>
        <taxon>Gammaproteobacteria</taxon>
        <taxon>Enterobacterales</taxon>
        <taxon>Yersiniaceae</taxon>
        <taxon>Yersinia</taxon>
    </lineage>
</organism>
<name>TRA8_YEREN</name>